<name>Y017_RICPR</name>
<sequence>MAKFKKDLTTKNKDTDRLSEEIDIPETKVNAFQAQQARIDEAQRDLLESNQQKSARKRFEENKTKEKVKKIFNNAKKKITRTKLKKLQDQVGNHIIMGTLPTIPNTLPTSKPTMQLSNDINRTVSEDEDGYLVPCKAQPQIYTVILPSQEIENHKSMDSDLWTLSSKTLGKEIDEVHPNIVLLSEKETEAKIVEDVKISNTTNSRGVFENTSKSFGQHNNFKLTQDLYGKDRKQYYKQEINSINSLDSAVLVESQQFKKTKSLEDIEDGSLSSQLKQTKYKSVLSPSSYVNDMFSNEHHQNSSIELPKLLHSSLSDTNSSLNDCINQLRCANTSDVYNLSYTLSNKTKQLSIDELKNTLEQMQTSPNINIVLPMLIRVQQDYVNEVAEIYQQTIEQRKQNPSEQAKNQEEVVAAYFTQEYDKLKIINSFRSLKTDSITNTSLASSVNIFGSNEDLSWDNTGDIGVGYRYGPEHSCPTPDDRLSSKLIDMSNKNTKNVKGLEEGVTIYDSIDSVADPLKSNDVSFEEINEALKQLSAAISETVINSSESKVQEDPEDILDGSILQAMLNSNNDQSIESLSLGSEEEQGQEETEASIQNAGDKKLLPVPASSNESTLLLSDCKKMNIYH</sequence>
<gene>
    <name type="ordered locus">RP017</name>
</gene>
<dbReference type="EMBL" id="AJ235270">
    <property type="protein sequence ID" value="CAA14489.1"/>
    <property type="molecule type" value="Genomic_DNA"/>
</dbReference>
<dbReference type="PIR" id="B71709">
    <property type="entry name" value="B71709"/>
</dbReference>
<dbReference type="RefSeq" id="NP_220412.1">
    <property type="nucleotide sequence ID" value="NC_000963.1"/>
</dbReference>
<dbReference type="SMR" id="Q9ZEC6"/>
<dbReference type="STRING" id="272947.gene:17555100"/>
<dbReference type="EnsemblBacteria" id="CAA14489">
    <property type="protein sequence ID" value="CAA14489"/>
    <property type="gene ID" value="CAA14489"/>
</dbReference>
<dbReference type="KEGG" id="rpr:RP017"/>
<dbReference type="PATRIC" id="fig|272947.5.peg.17"/>
<dbReference type="eggNOG" id="COG1196">
    <property type="taxonomic scope" value="Bacteria"/>
</dbReference>
<dbReference type="HOGENOM" id="CLU_436060_0_0_5"/>
<dbReference type="Proteomes" id="UP000002480">
    <property type="component" value="Chromosome"/>
</dbReference>
<protein>
    <recommendedName>
        <fullName>Uncharacterized protein RP017</fullName>
    </recommendedName>
</protein>
<feature type="chain" id="PRO_0000101298" description="Uncharacterized protein RP017">
    <location>
        <begin position="1"/>
        <end position="627"/>
    </location>
</feature>
<feature type="region of interest" description="Disordered" evidence="1">
    <location>
        <begin position="1"/>
        <end position="22"/>
    </location>
</feature>
<feature type="region of interest" description="Disordered" evidence="1">
    <location>
        <begin position="578"/>
        <end position="606"/>
    </location>
</feature>
<feature type="compositionally biased region" description="Basic and acidic residues" evidence="1">
    <location>
        <begin position="1"/>
        <end position="20"/>
    </location>
</feature>
<feature type="compositionally biased region" description="Acidic residues" evidence="1">
    <location>
        <begin position="582"/>
        <end position="592"/>
    </location>
</feature>
<evidence type="ECO:0000256" key="1">
    <source>
        <dbReference type="SAM" id="MobiDB-lite"/>
    </source>
</evidence>
<organism>
    <name type="scientific">Rickettsia prowazekii (strain Madrid E)</name>
    <dbReference type="NCBI Taxonomy" id="272947"/>
    <lineage>
        <taxon>Bacteria</taxon>
        <taxon>Pseudomonadati</taxon>
        <taxon>Pseudomonadota</taxon>
        <taxon>Alphaproteobacteria</taxon>
        <taxon>Rickettsiales</taxon>
        <taxon>Rickettsiaceae</taxon>
        <taxon>Rickettsieae</taxon>
        <taxon>Rickettsia</taxon>
        <taxon>typhus group</taxon>
    </lineage>
</organism>
<keyword id="KW-1185">Reference proteome</keyword>
<reference key="1">
    <citation type="journal article" date="1998" name="Nature">
        <title>The genome sequence of Rickettsia prowazekii and the origin of mitochondria.</title>
        <authorList>
            <person name="Andersson S.G.E."/>
            <person name="Zomorodipour A."/>
            <person name="Andersson J.O."/>
            <person name="Sicheritz-Ponten T."/>
            <person name="Alsmark U.C.M."/>
            <person name="Podowski R.M."/>
            <person name="Naeslund A.K."/>
            <person name="Eriksson A.-S."/>
            <person name="Winkler H.H."/>
            <person name="Kurland C.G."/>
        </authorList>
    </citation>
    <scope>NUCLEOTIDE SEQUENCE [LARGE SCALE GENOMIC DNA]</scope>
    <source>
        <strain>Madrid E</strain>
    </source>
</reference>
<proteinExistence type="predicted"/>
<accession>Q9ZEC6</accession>